<evidence type="ECO:0000255" key="1">
    <source>
        <dbReference type="HAMAP-Rule" id="MF_00093"/>
    </source>
</evidence>
<evidence type="ECO:0000256" key="2">
    <source>
        <dbReference type="SAM" id="MobiDB-lite"/>
    </source>
</evidence>
<accession>B0BXT9</accession>
<dbReference type="EMBL" id="CP000766">
    <property type="protein sequence ID" value="ABY72665.1"/>
    <property type="molecule type" value="Genomic_DNA"/>
</dbReference>
<dbReference type="RefSeq" id="WP_012150880.1">
    <property type="nucleotide sequence ID" value="NC_010263.3"/>
</dbReference>
<dbReference type="SMR" id="B0BXT9"/>
<dbReference type="GeneID" id="79937424"/>
<dbReference type="KEGG" id="rrj:RrIowa_0827"/>
<dbReference type="eggNOG" id="COG0216">
    <property type="taxonomic scope" value="Bacteria"/>
</dbReference>
<dbReference type="HOGENOM" id="CLU_036856_0_1_5"/>
<dbReference type="Proteomes" id="UP000000796">
    <property type="component" value="Chromosome"/>
</dbReference>
<dbReference type="GO" id="GO:0005737">
    <property type="term" value="C:cytoplasm"/>
    <property type="evidence" value="ECO:0007669"/>
    <property type="project" value="UniProtKB-SubCell"/>
</dbReference>
<dbReference type="GO" id="GO:0016149">
    <property type="term" value="F:translation release factor activity, codon specific"/>
    <property type="evidence" value="ECO:0007669"/>
    <property type="project" value="UniProtKB-UniRule"/>
</dbReference>
<dbReference type="FunFam" id="3.30.160.20:FF:000004">
    <property type="entry name" value="Peptide chain release factor 1"/>
    <property type="match status" value="1"/>
</dbReference>
<dbReference type="FunFam" id="3.30.70.1660:FF:000002">
    <property type="entry name" value="Peptide chain release factor 1"/>
    <property type="match status" value="1"/>
</dbReference>
<dbReference type="FunFam" id="3.30.70.1660:FF:000004">
    <property type="entry name" value="Peptide chain release factor 1"/>
    <property type="match status" value="1"/>
</dbReference>
<dbReference type="Gene3D" id="3.30.160.20">
    <property type="match status" value="1"/>
</dbReference>
<dbReference type="Gene3D" id="3.30.70.1660">
    <property type="match status" value="1"/>
</dbReference>
<dbReference type="Gene3D" id="6.10.140.1950">
    <property type="match status" value="1"/>
</dbReference>
<dbReference type="HAMAP" id="MF_00093">
    <property type="entry name" value="Rel_fac_1"/>
    <property type="match status" value="1"/>
</dbReference>
<dbReference type="InterPro" id="IPR005139">
    <property type="entry name" value="PCRF"/>
</dbReference>
<dbReference type="InterPro" id="IPR000352">
    <property type="entry name" value="Pep_chain_release_fac_I"/>
</dbReference>
<dbReference type="InterPro" id="IPR045853">
    <property type="entry name" value="Pep_chain_release_fac_I_sf"/>
</dbReference>
<dbReference type="InterPro" id="IPR050057">
    <property type="entry name" value="Prokaryotic/Mito_RF"/>
</dbReference>
<dbReference type="InterPro" id="IPR004373">
    <property type="entry name" value="RF-1"/>
</dbReference>
<dbReference type="NCBIfam" id="TIGR00019">
    <property type="entry name" value="prfA"/>
    <property type="match status" value="1"/>
</dbReference>
<dbReference type="NCBIfam" id="NF001859">
    <property type="entry name" value="PRK00591.1"/>
    <property type="match status" value="1"/>
</dbReference>
<dbReference type="PANTHER" id="PTHR43804">
    <property type="entry name" value="LD18447P"/>
    <property type="match status" value="1"/>
</dbReference>
<dbReference type="PANTHER" id="PTHR43804:SF7">
    <property type="entry name" value="LD18447P"/>
    <property type="match status" value="1"/>
</dbReference>
<dbReference type="Pfam" id="PF03462">
    <property type="entry name" value="PCRF"/>
    <property type="match status" value="1"/>
</dbReference>
<dbReference type="Pfam" id="PF00472">
    <property type="entry name" value="RF-1"/>
    <property type="match status" value="1"/>
</dbReference>
<dbReference type="SMART" id="SM00937">
    <property type="entry name" value="PCRF"/>
    <property type="match status" value="1"/>
</dbReference>
<dbReference type="SUPFAM" id="SSF75620">
    <property type="entry name" value="Release factor"/>
    <property type="match status" value="1"/>
</dbReference>
<dbReference type="PROSITE" id="PS00745">
    <property type="entry name" value="RF_PROK_I"/>
    <property type="match status" value="1"/>
</dbReference>
<sequence length="355" mass="39730">MRFSDNLAKILDKYENLGNKLSSGIMGDEFVKASKEYAELEDVVAKIKEYNKAKSELEEANNFKLEVGLDNATLEMIEDEIYTLENSLPKLERAVKIALLPKDDADSKSAIIEVRAGSGGEEAALFAAVLFNMYQRYAELKGWRFEILAISDTGIGGYKEASASIKGKDVFSKLKFESGVHRVQRVPETESQGRIHTSAATVAVLPEAEEVDIKIEDKDLRIDTYRASGAGGQHVNTTDSAVRITHIPTGITVALQDEKSQHKNKAKALKILRARIYEEERRKKEQARADSRRGQVGSGDRSERIRTYNFPQGRVSDHRIHLTLYKIDEVVKNGQLDEFVEALIADDEAKKLLEI</sequence>
<reference key="1">
    <citation type="journal article" date="2008" name="Infect. Immun.">
        <title>Genomic comparison of virulent Rickettsia rickettsii Sheila Smith and avirulent Rickettsia rickettsii Iowa.</title>
        <authorList>
            <person name="Ellison D.W."/>
            <person name="Clark T.R."/>
            <person name="Sturdevant D.E."/>
            <person name="Virtaneva K."/>
            <person name="Porcella S.F."/>
            <person name="Hackstadt T."/>
        </authorList>
    </citation>
    <scope>NUCLEOTIDE SEQUENCE [LARGE SCALE GENOMIC DNA]</scope>
    <source>
        <strain>Iowa</strain>
    </source>
</reference>
<keyword id="KW-0963">Cytoplasm</keyword>
<keyword id="KW-0488">Methylation</keyword>
<keyword id="KW-0648">Protein biosynthesis</keyword>
<organism>
    <name type="scientific">Rickettsia rickettsii (strain Iowa)</name>
    <dbReference type="NCBI Taxonomy" id="452659"/>
    <lineage>
        <taxon>Bacteria</taxon>
        <taxon>Pseudomonadati</taxon>
        <taxon>Pseudomonadota</taxon>
        <taxon>Alphaproteobacteria</taxon>
        <taxon>Rickettsiales</taxon>
        <taxon>Rickettsiaceae</taxon>
        <taxon>Rickettsieae</taxon>
        <taxon>Rickettsia</taxon>
        <taxon>spotted fever group</taxon>
    </lineage>
</organism>
<proteinExistence type="inferred from homology"/>
<gene>
    <name evidence="1" type="primary">prfA</name>
    <name type="ordered locus">RrIowa_0827</name>
</gene>
<feature type="chain" id="PRO_1000075511" description="Peptide chain release factor 1">
    <location>
        <begin position="1"/>
        <end position="355"/>
    </location>
</feature>
<feature type="region of interest" description="Disordered" evidence="2">
    <location>
        <begin position="282"/>
        <end position="305"/>
    </location>
</feature>
<feature type="compositionally biased region" description="Basic and acidic residues" evidence="2">
    <location>
        <begin position="282"/>
        <end position="293"/>
    </location>
</feature>
<feature type="modified residue" description="N5-methylglutamine" evidence="1">
    <location>
        <position position="233"/>
    </location>
</feature>
<comment type="function">
    <text evidence="1">Peptide chain release factor 1 directs the termination of translation in response to the peptide chain termination codons UAG and UAA.</text>
</comment>
<comment type="subcellular location">
    <subcellularLocation>
        <location evidence="1">Cytoplasm</location>
    </subcellularLocation>
</comment>
<comment type="PTM">
    <text evidence="1">Methylated by PrmC. Methylation increases the termination efficiency of RF1.</text>
</comment>
<comment type="similarity">
    <text evidence="1">Belongs to the prokaryotic/mitochondrial release factor family.</text>
</comment>
<protein>
    <recommendedName>
        <fullName evidence="1">Peptide chain release factor 1</fullName>
        <shortName evidence="1">RF-1</shortName>
    </recommendedName>
</protein>
<name>RF1_RICRO</name>